<feature type="chain" id="PRO_0000303982" description="Putative uncharacterized protein C23C4.04c">
    <location>
        <begin position="1"/>
        <end position="140"/>
    </location>
</feature>
<feature type="region of interest" description="Disordered" evidence="1">
    <location>
        <begin position="121"/>
        <end position="140"/>
    </location>
</feature>
<reference key="1">
    <citation type="journal article" date="2002" name="Nature">
        <title>The genome sequence of Schizosaccharomyces pombe.</title>
        <authorList>
            <person name="Wood V."/>
            <person name="Gwilliam R."/>
            <person name="Rajandream M.A."/>
            <person name="Lyne M.H."/>
            <person name="Lyne R."/>
            <person name="Stewart A."/>
            <person name="Sgouros J.G."/>
            <person name="Peat N."/>
            <person name="Hayles J."/>
            <person name="Baker S.G."/>
            <person name="Basham D."/>
            <person name="Bowman S."/>
            <person name="Brooks K."/>
            <person name="Brown D."/>
            <person name="Brown S."/>
            <person name="Chillingworth T."/>
            <person name="Churcher C.M."/>
            <person name="Collins M."/>
            <person name="Connor R."/>
            <person name="Cronin A."/>
            <person name="Davis P."/>
            <person name="Feltwell T."/>
            <person name="Fraser A."/>
            <person name="Gentles S."/>
            <person name="Goble A."/>
            <person name="Hamlin N."/>
            <person name="Harris D.E."/>
            <person name="Hidalgo J."/>
            <person name="Hodgson G."/>
            <person name="Holroyd S."/>
            <person name="Hornsby T."/>
            <person name="Howarth S."/>
            <person name="Huckle E.J."/>
            <person name="Hunt S."/>
            <person name="Jagels K."/>
            <person name="James K.D."/>
            <person name="Jones L."/>
            <person name="Jones M."/>
            <person name="Leather S."/>
            <person name="McDonald S."/>
            <person name="McLean J."/>
            <person name="Mooney P."/>
            <person name="Moule S."/>
            <person name="Mungall K.L."/>
            <person name="Murphy L.D."/>
            <person name="Niblett D."/>
            <person name="Odell C."/>
            <person name="Oliver K."/>
            <person name="O'Neil S."/>
            <person name="Pearson D."/>
            <person name="Quail M.A."/>
            <person name="Rabbinowitsch E."/>
            <person name="Rutherford K.M."/>
            <person name="Rutter S."/>
            <person name="Saunders D."/>
            <person name="Seeger K."/>
            <person name="Sharp S."/>
            <person name="Skelton J."/>
            <person name="Simmonds M.N."/>
            <person name="Squares R."/>
            <person name="Squares S."/>
            <person name="Stevens K."/>
            <person name="Taylor K."/>
            <person name="Taylor R.G."/>
            <person name="Tivey A."/>
            <person name="Walsh S.V."/>
            <person name="Warren T."/>
            <person name="Whitehead S."/>
            <person name="Woodward J.R."/>
            <person name="Volckaert G."/>
            <person name="Aert R."/>
            <person name="Robben J."/>
            <person name="Grymonprez B."/>
            <person name="Weltjens I."/>
            <person name="Vanstreels E."/>
            <person name="Rieger M."/>
            <person name="Schaefer M."/>
            <person name="Mueller-Auer S."/>
            <person name="Gabel C."/>
            <person name="Fuchs M."/>
            <person name="Duesterhoeft A."/>
            <person name="Fritzc C."/>
            <person name="Holzer E."/>
            <person name="Moestl D."/>
            <person name="Hilbert H."/>
            <person name="Borzym K."/>
            <person name="Langer I."/>
            <person name="Beck A."/>
            <person name="Lehrach H."/>
            <person name="Reinhardt R."/>
            <person name="Pohl T.M."/>
            <person name="Eger P."/>
            <person name="Zimmermann W."/>
            <person name="Wedler H."/>
            <person name="Wambutt R."/>
            <person name="Purnelle B."/>
            <person name="Goffeau A."/>
            <person name="Cadieu E."/>
            <person name="Dreano S."/>
            <person name="Gloux S."/>
            <person name="Lelaure V."/>
            <person name="Mottier S."/>
            <person name="Galibert F."/>
            <person name="Aves S.J."/>
            <person name="Xiang Z."/>
            <person name="Hunt C."/>
            <person name="Moore K."/>
            <person name="Hurst S.M."/>
            <person name="Lucas M."/>
            <person name="Rochet M."/>
            <person name="Gaillardin C."/>
            <person name="Tallada V.A."/>
            <person name="Garzon A."/>
            <person name="Thode G."/>
            <person name="Daga R.R."/>
            <person name="Cruzado L."/>
            <person name="Jimenez J."/>
            <person name="Sanchez M."/>
            <person name="del Rey F."/>
            <person name="Benito J."/>
            <person name="Dominguez A."/>
            <person name="Revuelta J.L."/>
            <person name="Moreno S."/>
            <person name="Armstrong J."/>
            <person name="Forsburg S.L."/>
            <person name="Cerutti L."/>
            <person name="Lowe T."/>
            <person name="McCombie W.R."/>
            <person name="Paulsen I."/>
            <person name="Potashkin J."/>
            <person name="Shpakovski G.V."/>
            <person name="Ussery D."/>
            <person name="Barrell B.G."/>
            <person name="Nurse P."/>
        </authorList>
    </citation>
    <scope>NUCLEOTIDE SEQUENCE [LARGE SCALE GENOMIC DNA]</scope>
    <source>
        <strain>972 / ATCC 24843</strain>
    </source>
</reference>
<protein>
    <recommendedName>
        <fullName>Putative uncharacterized protein C23C4.04c</fullName>
    </recommendedName>
</protein>
<gene>
    <name type="ORF">SPAC23C4.04c</name>
</gene>
<organism>
    <name type="scientific">Schizosaccharomyces pombe (strain 972 / ATCC 24843)</name>
    <name type="common">Fission yeast</name>
    <dbReference type="NCBI Taxonomy" id="284812"/>
    <lineage>
        <taxon>Eukaryota</taxon>
        <taxon>Fungi</taxon>
        <taxon>Dikarya</taxon>
        <taxon>Ascomycota</taxon>
        <taxon>Taphrinomycotina</taxon>
        <taxon>Schizosaccharomycetes</taxon>
        <taxon>Schizosaccharomycetales</taxon>
        <taxon>Schizosaccharomycetaceae</taxon>
        <taxon>Schizosaccharomyces</taxon>
    </lineage>
</organism>
<proteinExistence type="predicted"/>
<keyword id="KW-1185">Reference proteome</keyword>
<dbReference type="EMBL" id="CU329670">
    <property type="protein sequence ID" value="CAO77637.2"/>
    <property type="molecule type" value="Genomic_DNA"/>
</dbReference>
<dbReference type="RefSeq" id="XP_001713047.2">
    <property type="nucleotide sequence ID" value="XM_001712995.2"/>
</dbReference>
<dbReference type="STRING" id="284812.A6X970"/>
<dbReference type="PaxDb" id="4896-SPAC23C4.04c.1"/>
<dbReference type="EnsemblFungi" id="SPAC23C4.04c.1">
    <property type="protein sequence ID" value="SPAC23C4.04c.1:pep"/>
    <property type="gene ID" value="SPAC23C4.04c"/>
</dbReference>
<dbReference type="PomBase" id="SPAC23C4.04c"/>
<dbReference type="VEuPathDB" id="FungiDB:SPAC23C4.04c"/>
<dbReference type="HOGENOM" id="CLU_1836309_0_0_1"/>
<dbReference type="InParanoid" id="A6X970"/>
<dbReference type="PRO" id="PR:A6X970"/>
<dbReference type="Proteomes" id="UP000002485">
    <property type="component" value="Chromosome I"/>
</dbReference>
<name>YF64_SCHPO</name>
<evidence type="ECO:0000256" key="1">
    <source>
        <dbReference type="SAM" id="MobiDB-lite"/>
    </source>
</evidence>
<accession>A6X970</accession>
<sequence length="140" mass="16653">MFCYFLSKSYDDCSRYYIISNMAFYFPVYDSDSPTTVHHDERKESWRSHGFIVCLHIRCCICCKYNSKIKKPSLNIALRIQSLKIIKILIFQFYSTKPLWDKNSPEYKQLRSEIEATKRDEEVKNGELIDPNVTTEDEKL</sequence>